<accession>Q8IDG7</accession>
<sequence length="2068" mass="248260">MDFFIIIFILLLSFFFFDYNFCSRGLVFYIGNKSLKLLKKCNNLEKVYRSTIYLIFPFLQHIFVHIFYYYIEKKKEYLNNLIFEQSKEHYDIKGQKEFEACNFKKEDIFNYIIETSIKIKNYVYNKALHIFFFIVEYTNIYENINLNCHINTREVLNNNNFGVVIIDYYLPNTSIKKKKKKKKKDQTYNYINDSEKIDLYDLVNIKQEKKIKFVLIDNKWKHILGLGKIEDPNVQHLYLQDTVLIQYLQFSWIFKNHFFKKLYNDRDVSTHNYYEIKKNSMQQNDRDGVKEQYKKTCLGEEELIVDGNTCNNNHLNDHVNIKDEEYFNNKNYMNDQEEIIIRSLKKWNINKENVCSNKEENFNLITNNDKLMENTIYKNDNKDLYIETQKMKEDHVYNNSINLKKTKINEIEQNNLNTQNNNCYSNKEKYYINQEKKKQQLKYIKNENMIRDKLKMQLNRWKYKNIKGIIVILPEIFYNYINMNEMENKIPIYYFLKKDIKIDTFTVIAKLLGYICIHIHININFGFSIPFIFKSKTTNILNISNNFNLHMNKNLFNIYNENGTSNIKGTHTNISSDDKKLKCSKHISKQDIKNNINLCHKSVSNLNDHEKENKNKQDKMNIYSYINDHINIYNNDNNDNNSIHNNLYNKQNDNIKDTINYMDQNDKNNCHDMFLNNNYNEQSNEYHNHQQCVNNINDENRYQNYAHNNNNNNYNYIHTDYTNSKLNSIVENKFNMDDNYTFLFSTPFSFFSDNYNDLNIAMNHFKAIFKNYNFVFLCFNDGTNIMLNYFLEKIYKKKKNKTPGGMTTLISTAGVAENIKNTFNLYNTNAYKCHINNYKKKHVHDTKGDTYDNEKKKHSKLYPINKSEEDKKSKCTLHKANNKSNIMSLFFGEKKKKKYLEHEQMNQSQRFKKITKKWDIHKILSDIKGNDKSSFINQDKKINERKYNEIDKNDSDDSNASYDDEKILSHVVKEQMHSGEDEKEELGEPKEKGSKSCQEEEEQDEEEEDEDEEEEEDQGVNNYDNYVDGVDRDVENYDNYIDDVDRDVENYDKGIANVDHHLNDVHKDLDDHKKVEEVIADIEKEDKNVERKNVNLKGAQNKTEYQQELVKKLDTDQNINIDKKTMNQINNSEFSNNVENVQDKQKNKIKKEEMFTKNTKKNMKIKMKDNKNNDMGKLRNIKEKLKKKKMETLLNLSKLNIFHKNSEQISENYIKEEDNLYRNDYNTNESKIWSIYESHVSNDPRGSASTYKGNSSINKFANMSLSNFASFIKKHKNNNSNHSLVGSFKDNLEIKEIISKTNCEKNLNKYIDLNKENVMEIDMKEFVEPNIKHDVEKNVYKDINKNTNNEIVKTHNIVDEKNLNTQIQKYVNYDNEKNIKEDVERNVENNCERHEMKNSEIKKIKLNILEKFRKKEIRKCDNMDDAPRISNKFRYSFFKIRNRFKHNFNACDNKTNQEKKNMERDKMMINSFIKNKNAMVSDANSTSTADSNFDDYGKKHTKEICILINFSYNNMFDIFNYPDDFIETKKRKFSIVHKFFYSLNIFFNSFSTLIKQRYFFRCTSELSNFLKRSLFYDFYNNLLCKISTDDQDRNNFLLDINNSSNEYDVHLKRLSDITYICNSEKPDKYRDLLENKSNITSIYDDKKNVSRTNMSTYINKDMECTWHDNNQNKKSEKNFENIKNENIQEIDKIDLKYNNINNNNNNNNISENNNIRSNIGNEIYNNVSDMNKKNSSNNVNNPMEYNKDYTYNNSSIRDNDNNINVEIYKKNSLNTIEYFENNLSFFNKIHKMNKKKDEYKCDEKLYCKTKNIKSNNELYDVKNSYKLNNNNNNNNMIFNETYNNNTFFKNIYSDSFESKIRVYFNIKSLYEKWKIYFEDKQIDISIQDKFLYNLSFIYNVYNYLILIYIYTYYNEESYLAFCNNQKFYQFIEKIHCYFNEKKNNHILYKNVRNSESFNTSIIPRFLNYHDYKLLKVFFFMLQNSSNKFISKNIHLFNFPVVFIFSSDSKNFNFNHFDIIKISKNNNIIYLLYKRGNEGLFLSGLKPYIWIYRVLFDFVESLFLSSFDN</sequence>
<gene>
    <name type="ORF">PF13_0277</name>
</gene>
<feature type="chain" id="PRO_0000361761" description="Uncharacterized protein PF13_0277">
    <location>
        <begin position="1"/>
        <end position="2068"/>
    </location>
</feature>
<feature type="transmembrane region" description="Helical" evidence="1">
    <location>
        <begin position="3"/>
        <end position="23"/>
    </location>
</feature>
<feature type="transmembrane region" description="Helical" evidence="1">
    <location>
        <begin position="51"/>
        <end position="71"/>
    </location>
</feature>
<feature type="transmembrane region" description="Helical" evidence="1">
    <location>
        <begin position="1890"/>
        <end position="1910"/>
    </location>
</feature>
<feature type="region of interest" description="Disordered" evidence="2">
    <location>
        <begin position="975"/>
        <end position="1030"/>
    </location>
</feature>
<feature type="compositionally biased region" description="Basic and acidic residues" evidence="2">
    <location>
        <begin position="975"/>
        <end position="998"/>
    </location>
</feature>
<feature type="compositionally biased region" description="Acidic residues" evidence="2">
    <location>
        <begin position="999"/>
        <end position="1018"/>
    </location>
</feature>
<organism>
    <name type="scientific">Plasmodium falciparum (isolate 3D7)</name>
    <dbReference type="NCBI Taxonomy" id="36329"/>
    <lineage>
        <taxon>Eukaryota</taxon>
        <taxon>Sar</taxon>
        <taxon>Alveolata</taxon>
        <taxon>Apicomplexa</taxon>
        <taxon>Aconoidasida</taxon>
        <taxon>Haemosporida</taxon>
        <taxon>Plasmodiidae</taxon>
        <taxon>Plasmodium</taxon>
        <taxon>Plasmodium (Laverania)</taxon>
    </lineage>
</organism>
<name>YPF01_PLAF7</name>
<keyword id="KW-0472">Membrane</keyword>
<keyword id="KW-0477">Merozoite</keyword>
<keyword id="KW-1185">Reference proteome</keyword>
<keyword id="KW-0812">Transmembrane</keyword>
<keyword id="KW-1133">Transmembrane helix</keyword>
<reference key="1">
    <citation type="journal article" date="2002" name="Nature">
        <title>Genome sequence of the human malaria parasite Plasmodium falciparum.</title>
        <authorList>
            <person name="Gardner M.J."/>
            <person name="Hall N."/>
            <person name="Fung E."/>
            <person name="White O."/>
            <person name="Berriman M."/>
            <person name="Hyman R.W."/>
            <person name="Carlton J.M."/>
            <person name="Pain A."/>
            <person name="Nelson K.E."/>
            <person name="Bowman S."/>
            <person name="Paulsen I.T."/>
            <person name="James K.D."/>
            <person name="Eisen J.A."/>
            <person name="Rutherford K.M."/>
            <person name="Salzberg S.L."/>
            <person name="Craig A."/>
            <person name="Kyes S."/>
            <person name="Chan M.-S."/>
            <person name="Nene V."/>
            <person name="Shallom S.J."/>
            <person name="Suh B."/>
            <person name="Peterson J."/>
            <person name="Angiuoli S."/>
            <person name="Pertea M."/>
            <person name="Allen J."/>
            <person name="Selengut J."/>
            <person name="Haft D."/>
            <person name="Mather M.W."/>
            <person name="Vaidya A.B."/>
            <person name="Martin D.M.A."/>
            <person name="Fairlamb A.H."/>
            <person name="Fraunholz M.J."/>
            <person name="Roos D.S."/>
            <person name="Ralph S.A."/>
            <person name="McFadden G.I."/>
            <person name="Cummings L.M."/>
            <person name="Subramanian G.M."/>
            <person name="Mungall C."/>
            <person name="Venter J.C."/>
            <person name="Carucci D.J."/>
            <person name="Hoffman S.L."/>
            <person name="Newbold C."/>
            <person name="Davis R.W."/>
            <person name="Fraser C.M."/>
            <person name="Barrell B.G."/>
        </authorList>
    </citation>
    <scope>NUCLEOTIDE SEQUENCE [LARGE SCALE GENOMIC DNA]</scope>
    <source>
        <strain>3D7</strain>
    </source>
</reference>
<reference evidence="4" key="2">
    <citation type="journal article" date="2002" name="Nature">
        <title>Sequence of Plasmodium falciparum chromosomes 1, 3-9 and 13.</title>
        <authorList>
            <person name="Hall N."/>
            <person name="Pain A."/>
            <person name="Berriman M."/>
            <person name="Churcher C.M."/>
            <person name="Harris B."/>
            <person name="Harris D."/>
            <person name="Mungall K.L."/>
            <person name="Bowman S."/>
            <person name="Atkin R."/>
            <person name="Baker S."/>
            <person name="Barron A."/>
            <person name="Brooks K."/>
            <person name="Buckee C.O."/>
            <person name="Burrows C."/>
            <person name="Cherevach I."/>
            <person name="Chillingworth C."/>
            <person name="Chillingworth T."/>
            <person name="Christodoulou Z."/>
            <person name="Clark L."/>
            <person name="Clark R."/>
            <person name="Corton C."/>
            <person name="Cronin A."/>
            <person name="Davies R.M."/>
            <person name="Davis P."/>
            <person name="Dear P."/>
            <person name="Dearden F."/>
            <person name="Doggett J."/>
            <person name="Feltwell T."/>
            <person name="Goble A."/>
            <person name="Goodhead I."/>
            <person name="Gwilliam R."/>
            <person name="Hamlin N."/>
            <person name="Hance Z."/>
            <person name="Harper D."/>
            <person name="Hauser H."/>
            <person name="Hornsby T."/>
            <person name="Holroyd S."/>
            <person name="Horrocks P."/>
            <person name="Humphray S."/>
            <person name="Jagels K."/>
            <person name="James K.D."/>
            <person name="Johnson D."/>
            <person name="Kerhornou A."/>
            <person name="Knights A."/>
            <person name="Konfortov B."/>
            <person name="Kyes S."/>
            <person name="Larke N."/>
            <person name="Lawson D."/>
            <person name="Lennard N."/>
            <person name="Line A."/>
            <person name="Maddison M."/>
            <person name="Mclean J."/>
            <person name="Mooney P."/>
            <person name="Moule S."/>
            <person name="Murphy L."/>
            <person name="Oliver K."/>
            <person name="Ormond D."/>
            <person name="Price C."/>
            <person name="Quail M.A."/>
            <person name="Rabbinowitsch E."/>
            <person name="Rajandream M.A."/>
            <person name="Rutter S."/>
            <person name="Rutherford K.M."/>
            <person name="Sanders M."/>
            <person name="Simmonds M."/>
            <person name="Seeger K."/>
            <person name="Sharp S."/>
            <person name="Smith R."/>
            <person name="Squares R."/>
            <person name="Squares S."/>
            <person name="Stevens K."/>
            <person name="Taylor K."/>
            <person name="Tivey A."/>
            <person name="Unwin L."/>
            <person name="Whitehead S."/>
            <person name="Woodward J.R."/>
            <person name="Sulston J.E."/>
            <person name="Craig A."/>
            <person name="Newbold C."/>
            <person name="Barrell B.G."/>
        </authorList>
    </citation>
    <scope>NUCLEOTIDE SEQUENCE [LARGE SCALE GENOMIC DNA]</scope>
    <source>
        <strain>3D7</strain>
    </source>
</reference>
<reference evidence="3" key="3">
    <citation type="journal article" date="2007" name="PLoS ONE">
        <title>Rapid identification of malaria vaccine candidates based on alpha-helical coiled coil protein motif.</title>
        <authorList>
            <person name="Villard V."/>
            <person name="Agak G.W."/>
            <person name="Frank G."/>
            <person name="Jafarshad A."/>
            <person name="Servis C."/>
            <person name="Nebie I."/>
            <person name="Sirima S.B."/>
            <person name="Felger I."/>
            <person name="Arevalo-Herrera M."/>
            <person name="Herrera S."/>
            <person name="Heitz F."/>
            <person name="Baecker V."/>
            <person name="Druilhe P."/>
            <person name="Kajava A.V."/>
            <person name="Corradin G."/>
        </authorList>
    </citation>
    <scope>SYNTHESIS OF 1040-1066</scope>
    <scope>POSSIBLE CANDIDATE MALARIA EPITOPE</scope>
</reference>
<proteinExistence type="inferred from homology"/>
<dbReference type="EMBL" id="AL844509">
    <property type="protein sequence ID" value="CAD52654.1"/>
    <property type="molecule type" value="Genomic_DNA"/>
</dbReference>
<dbReference type="RefSeq" id="XP_001350245.1">
    <property type="nucleotide sequence ID" value="XM_001350209.1"/>
</dbReference>
<dbReference type="BioGRID" id="1209497">
    <property type="interactions" value="1"/>
</dbReference>
<dbReference type="FunCoup" id="Q8IDG7">
    <property type="interactions" value="287"/>
</dbReference>
<dbReference type="STRING" id="36329.Q8IDG7"/>
<dbReference type="PaxDb" id="5833-PF13_0277"/>
<dbReference type="EnsemblProtists" id="CAD52654">
    <property type="protein sequence ID" value="CAD52654"/>
    <property type="gene ID" value="PF3D7_1353300"/>
</dbReference>
<dbReference type="KEGG" id="pfa:PF3D7_1353300"/>
<dbReference type="VEuPathDB" id="PlasmoDB:PF3D7_1353300"/>
<dbReference type="HOGENOM" id="CLU_232867_0_0_1"/>
<dbReference type="InParanoid" id="Q8IDG7"/>
<dbReference type="OMA" id="DYNFCSK"/>
<dbReference type="OrthoDB" id="392868at2759"/>
<dbReference type="PhylomeDB" id="Q8IDG7"/>
<dbReference type="Proteomes" id="UP000001450">
    <property type="component" value="Chromosome 13"/>
</dbReference>
<dbReference type="GO" id="GO:0016020">
    <property type="term" value="C:membrane"/>
    <property type="evidence" value="ECO:0007669"/>
    <property type="project" value="UniProtKB-SubCell"/>
</dbReference>
<protein>
    <recommendedName>
        <fullName>Uncharacterized protein PF13_0277</fullName>
    </recommendedName>
</protein>
<comment type="subcellular location">
    <subcellularLocation>
        <location evidence="1">Membrane</location>
        <topology evidence="1">Multi-pass membrane protein</topology>
    </subcellularLocation>
</comment>
<comment type="biotechnology">
    <text evidence="3">Possible candidate for an effective malaria vaccine as determined by epitope response in sera.</text>
</comment>
<evidence type="ECO:0000255" key="1"/>
<evidence type="ECO:0000256" key="2">
    <source>
        <dbReference type="SAM" id="MobiDB-lite"/>
    </source>
</evidence>
<evidence type="ECO:0000305" key="3"/>
<evidence type="ECO:0000312" key="4">
    <source>
        <dbReference type="EMBL" id="CAD52654.1"/>
    </source>
</evidence>